<feature type="chain" id="PRO_0000200912" description="Putative kinase Y4mE">
    <location>
        <begin position="1"/>
        <end position="420"/>
    </location>
</feature>
<feature type="active site" description="Proton acceptor" evidence="1">
    <location>
        <position position="302"/>
    </location>
</feature>
<organism>
    <name type="scientific">Sinorhizobium fredii (strain NBRC 101917 / NGR234)</name>
    <dbReference type="NCBI Taxonomy" id="394"/>
    <lineage>
        <taxon>Bacteria</taxon>
        <taxon>Pseudomonadati</taxon>
        <taxon>Pseudomonadota</taxon>
        <taxon>Alphaproteobacteria</taxon>
        <taxon>Hyphomicrobiales</taxon>
        <taxon>Rhizobiaceae</taxon>
        <taxon>Sinorhizobium/Ensifer group</taxon>
        <taxon>Sinorhizobium</taxon>
    </lineage>
</organism>
<accession>P55564</accession>
<keyword id="KW-0418">Kinase</keyword>
<keyword id="KW-0614">Plasmid</keyword>
<keyword id="KW-1185">Reference proteome</keyword>
<keyword id="KW-0808">Transferase</keyword>
<reference key="1">
    <citation type="journal article" date="1997" name="Nature">
        <title>Molecular basis of symbiosis between Rhizobium and legumes.</title>
        <authorList>
            <person name="Freiberg C.A."/>
            <person name="Fellay R."/>
            <person name="Bairoch A."/>
            <person name="Broughton W.J."/>
            <person name="Rosenthal A."/>
            <person name="Perret X."/>
        </authorList>
    </citation>
    <scope>NUCLEOTIDE SEQUENCE [LARGE SCALE GENOMIC DNA]</scope>
    <source>
        <strain>NBRC 101917 / NGR234</strain>
    </source>
</reference>
<reference key="2">
    <citation type="journal article" date="2009" name="Appl. Environ. Microbiol.">
        <title>Rhizobium sp. strain NGR234 possesses a remarkable number of secretion systems.</title>
        <authorList>
            <person name="Schmeisser C."/>
            <person name="Liesegang H."/>
            <person name="Krysciak D."/>
            <person name="Bakkou N."/>
            <person name="Le Quere A."/>
            <person name="Wollherr A."/>
            <person name="Heinemeyer I."/>
            <person name="Morgenstern B."/>
            <person name="Pommerening-Roeser A."/>
            <person name="Flores M."/>
            <person name="Palacios R."/>
            <person name="Brenner S."/>
            <person name="Gottschalk G."/>
            <person name="Schmitz R.A."/>
            <person name="Broughton W.J."/>
            <person name="Perret X."/>
            <person name="Strittmatter A.W."/>
            <person name="Streit W.R."/>
        </authorList>
    </citation>
    <scope>NUCLEOTIDE SEQUENCE [LARGE SCALE GENOMIC DNA]</scope>
    <source>
        <strain>NBRC 101917 / NGR234</strain>
    </source>
</reference>
<comment type="similarity">
    <text evidence="2">Belongs to the HipA Ser/Thr kinase family.</text>
</comment>
<proteinExistence type="inferred from homology"/>
<gene>
    <name type="ordered locus">NGR_a02540</name>
    <name type="ORF">y4mE</name>
</gene>
<name>Y4ME_SINFN</name>
<geneLocation type="plasmid">
    <name>sym pNGR234a</name>
</geneLocation>
<dbReference type="EC" id="2.-.-.-"/>
<dbReference type="EMBL" id="U00090">
    <property type="protein sequence ID" value="AAB91768.1"/>
    <property type="molecule type" value="Genomic_DNA"/>
</dbReference>
<dbReference type="RefSeq" id="NP_443971.1">
    <property type="nucleotide sequence ID" value="NC_000914.2"/>
</dbReference>
<dbReference type="RefSeq" id="WP_010875279.1">
    <property type="nucleotide sequence ID" value="NC_000914.2"/>
</dbReference>
<dbReference type="SMR" id="P55564"/>
<dbReference type="KEGG" id="rhi:NGR_a02540"/>
<dbReference type="PATRIC" id="fig|394.7.peg.264"/>
<dbReference type="eggNOG" id="COG3550">
    <property type="taxonomic scope" value="Bacteria"/>
</dbReference>
<dbReference type="HOGENOM" id="CLU_030167_1_0_5"/>
<dbReference type="OrthoDB" id="9805913at2"/>
<dbReference type="Proteomes" id="UP000001054">
    <property type="component" value="Plasmid pNGR234a"/>
</dbReference>
<dbReference type="GO" id="GO:0005829">
    <property type="term" value="C:cytosol"/>
    <property type="evidence" value="ECO:0007669"/>
    <property type="project" value="TreeGrafter"/>
</dbReference>
<dbReference type="GO" id="GO:0004674">
    <property type="term" value="F:protein serine/threonine kinase activity"/>
    <property type="evidence" value="ECO:0007669"/>
    <property type="project" value="TreeGrafter"/>
</dbReference>
<dbReference type="CDD" id="cd17793">
    <property type="entry name" value="HipA"/>
    <property type="match status" value="1"/>
</dbReference>
<dbReference type="Gene3D" id="1.10.1070.20">
    <property type="match status" value="1"/>
</dbReference>
<dbReference type="InterPro" id="IPR012893">
    <property type="entry name" value="HipA-like_C"/>
</dbReference>
<dbReference type="InterPro" id="IPR017508">
    <property type="entry name" value="HipA_N1"/>
</dbReference>
<dbReference type="InterPro" id="IPR052028">
    <property type="entry name" value="HipA_Ser/Thr_kinase"/>
</dbReference>
<dbReference type="NCBIfam" id="TIGR03071">
    <property type="entry name" value="couple_hipA"/>
    <property type="match status" value="1"/>
</dbReference>
<dbReference type="PANTHER" id="PTHR37419">
    <property type="entry name" value="SERINE/THREONINE-PROTEIN KINASE TOXIN HIPA"/>
    <property type="match status" value="1"/>
</dbReference>
<dbReference type="PANTHER" id="PTHR37419:SF1">
    <property type="entry name" value="SERINE_THREONINE-PROTEIN KINASE TOXIN HIPA"/>
    <property type="match status" value="1"/>
</dbReference>
<dbReference type="Pfam" id="PF13657">
    <property type="entry name" value="Couple_hipA"/>
    <property type="match status" value="1"/>
</dbReference>
<dbReference type="Pfam" id="PF07804">
    <property type="entry name" value="HipA_C"/>
    <property type="match status" value="1"/>
</dbReference>
<evidence type="ECO:0000255" key="1"/>
<evidence type="ECO:0000305" key="2"/>
<sequence length="420" mass="45729">MTVRVLNVWWDGRIVGQFTQDRHGDIGFAYSEAWLDDENTLPLSASLPKRAEPFSRRECRPFFGGLLPEESQRLVTAQALGVSPANDFALLDRLGGDVAGALQLLPEDQEPIEAGPLPDQQPTPLDEAGIVRILDALPTRPLLAGQEGLRLSLAGAQSKVPLVLIDGELALPVSGQATTHILKPPIARFPGTTENEAFVMRLAAAIGLDVAPVEPRSANGRPFLVVERYDRYRDADGVVHRIHQEDFCQALGVPPETKYASEGGPTFKDCFELLRRVSARPATDVLKLLDAAIFNLVVGNADAHGKNFSILYDDQGPKMAPLYDLLSTVAYPDLSPKMAMRIGKRVTLAEMDADGWQTFAKEAGVGLPLVRRRITNLVDSTAEAVARVLEDTSDLYIDSARINHFADSVAGRAKLVRLSI</sequence>
<protein>
    <recommendedName>
        <fullName>Putative kinase Y4mE</fullName>
        <ecNumber>2.-.-.-</ecNumber>
    </recommendedName>
</protein>